<proteinExistence type="evidence at protein level"/>
<feature type="chain" id="PRO_0000371502" description="Uncharacterized protein PF3D7_1120000">
    <location>
        <begin position="1"/>
        <end position="1070"/>
    </location>
</feature>
<feature type="region of interest" description="Disordered" evidence="2">
    <location>
        <begin position="66"/>
        <end position="88"/>
    </location>
</feature>
<feature type="region of interest" description="Disordered" evidence="2">
    <location>
        <begin position="355"/>
        <end position="388"/>
    </location>
</feature>
<feature type="region of interest" description="Disordered" evidence="2">
    <location>
        <begin position="423"/>
        <end position="483"/>
    </location>
</feature>
<feature type="region of interest" description="Disordered" evidence="2">
    <location>
        <begin position="667"/>
        <end position="692"/>
    </location>
</feature>
<feature type="region of interest" description="Disordered" evidence="2">
    <location>
        <begin position="735"/>
        <end position="786"/>
    </location>
</feature>
<feature type="coiled-coil region" evidence="1">
    <location>
        <begin position="475"/>
        <end position="736"/>
    </location>
</feature>
<feature type="compositionally biased region" description="Low complexity" evidence="2">
    <location>
        <begin position="73"/>
        <end position="83"/>
    </location>
</feature>
<feature type="compositionally biased region" description="Basic and acidic residues" evidence="2">
    <location>
        <begin position="435"/>
        <end position="460"/>
    </location>
</feature>
<feature type="compositionally biased region" description="Basic and acidic residues" evidence="2">
    <location>
        <begin position="474"/>
        <end position="483"/>
    </location>
</feature>
<feature type="compositionally biased region" description="Polar residues" evidence="2">
    <location>
        <begin position="735"/>
        <end position="745"/>
    </location>
</feature>
<feature type="compositionally biased region" description="Basic and acidic residues" evidence="2">
    <location>
        <begin position="751"/>
        <end position="765"/>
    </location>
</feature>
<feature type="compositionally biased region" description="Low complexity" evidence="2">
    <location>
        <begin position="773"/>
        <end position="786"/>
    </location>
</feature>
<keyword id="KW-0175">Coiled coil</keyword>
<keyword id="KW-0477">Merozoite</keyword>
<keyword id="KW-1185">Reference proteome</keyword>
<gene>
    <name type="ORF">PF11_0207</name>
    <name type="ORF">PF3D7_1120000</name>
</gene>
<reference key="1">
    <citation type="journal article" date="2002" name="Nature">
        <title>Genome sequence of the human malaria parasite Plasmodium falciparum.</title>
        <authorList>
            <person name="Gardner M.J."/>
            <person name="Hall N."/>
            <person name="Fung E."/>
            <person name="White O."/>
            <person name="Berriman M."/>
            <person name="Hyman R.W."/>
            <person name="Carlton J.M."/>
            <person name="Pain A."/>
            <person name="Nelson K.E."/>
            <person name="Bowman S."/>
            <person name="Paulsen I.T."/>
            <person name="James K.D."/>
            <person name="Eisen J.A."/>
            <person name="Rutherford K.M."/>
            <person name="Salzberg S.L."/>
            <person name="Craig A."/>
            <person name="Kyes S."/>
            <person name="Chan M.-S."/>
            <person name="Nene V."/>
            <person name="Shallom S.J."/>
            <person name="Suh B."/>
            <person name="Peterson J."/>
            <person name="Angiuoli S."/>
            <person name="Pertea M."/>
            <person name="Allen J."/>
            <person name="Selengut J."/>
            <person name="Haft D."/>
            <person name="Mather M.W."/>
            <person name="Vaidya A.B."/>
            <person name="Martin D.M.A."/>
            <person name="Fairlamb A.H."/>
            <person name="Fraunholz M.J."/>
            <person name="Roos D.S."/>
            <person name="Ralph S.A."/>
            <person name="McFadden G.I."/>
            <person name="Cummings L.M."/>
            <person name="Subramanian G.M."/>
            <person name="Mungall C."/>
            <person name="Venter J.C."/>
            <person name="Carucci D.J."/>
            <person name="Hoffman S.L."/>
            <person name="Newbold C."/>
            <person name="Davis R.W."/>
            <person name="Fraser C.M."/>
            <person name="Barrell B.G."/>
        </authorList>
    </citation>
    <scope>NUCLEOTIDE SEQUENCE [LARGE SCALE GENOMIC DNA]</scope>
    <source>
        <strain>3D7</strain>
    </source>
</reference>
<reference evidence="4" key="2">
    <citation type="journal article" date="2007" name="PLoS ONE">
        <title>Rapid identification of malaria vaccine candidates based on alpha-helical coiled coil protein motif.</title>
        <authorList>
            <person name="Villard V."/>
            <person name="Agak G.W."/>
            <person name="Frank G."/>
            <person name="Jafarshad A."/>
            <person name="Servis C."/>
            <person name="Nebie I."/>
            <person name="Sirima S.B."/>
            <person name="Felger I."/>
            <person name="Arevalo-Herrera M."/>
            <person name="Herrera S."/>
            <person name="Heitz F."/>
            <person name="Baecker V."/>
            <person name="Druilhe P."/>
            <person name="Kajava A.V."/>
            <person name="Corradin G."/>
        </authorList>
    </citation>
    <scope>SYNTHESIS OF 535-571</scope>
    <scope>POSSIBLE CANDIDATE MALARIA EPITOPE</scope>
</reference>
<dbReference type="EMBL" id="LN999945">
    <property type="protein sequence ID" value="CZT98862.1"/>
    <property type="molecule type" value="Genomic_DNA"/>
</dbReference>
<dbReference type="RefSeq" id="XP_001347878.2">
    <property type="nucleotide sequence ID" value="XM_001347842.2"/>
</dbReference>
<dbReference type="SMR" id="Q8IIG7"/>
<dbReference type="BioGRID" id="1206149">
    <property type="interactions" value="1"/>
</dbReference>
<dbReference type="FunCoup" id="Q8IIG7">
    <property type="interactions" value="684"/>
</dbReference>
<dbReference type="IntAct" id="Q8IIG7">
    <property type="interactions" value="1"/>
</dbReference>
<dbReference type="PaxDb" id="5833-PF11_0207"/>
<dbReference type="EnsemblProtists" id="CZT98862">
    <property type="protein sequence ID" value="CZT98862"/>
    <property type="gene ID" value="PF3D7_1120000"/>
</dbReference>
<dbReference type="GeneID" id="810754"/>
<dbReference type="KEGG" id="pfa:PF3D7_1120000"/>
<dbReference type="VEuPathDB" id="PlasmoDB:PF3D7_1120000"/>
<dbReference type="HOGENOM" id="CLU_322253_0_0_1"/>
<dbReference type="InParanoid" id="Q8IIG7"/>
<dbReference type="OMA" id="PKRVIMY"/>
<dbReference type="OrthoDB" id="445594at2759"/>
<dbReference type="PhylomeDB" id="Q8IIG7"/>
<dbReference type="Proteomes" id="UP000001450">
    <property type="component" value="Chromosome 11"/>
</dbReference>
<dbReference type="GO" id="GO:0005737">
    <property type="term" value="C:cytoplasm"/>
    <property type="evidence" value="ECO:0000303"/>
    <property type="project" value="UniProtKB"/>
</dbReference>
<dbReference type="GO" id="GO:0016020">
    <property type="term" value="C:membrane"/>
    <property type="evidence" value="ECO:0000303"/>
    <property type="project" value="UniProtKB"/>
</dbReference>
<dbReference type="CDD" id="cd11473">
    <property type="entry name" value="W2"/>
    <property type="match status" value="1"/>
</dbReference>
<dbReference type="Gene3D" id="1.20.120.20">
    <property type="entry name" value="Apolipoprotein"/>
    <property type="match status" value="1"/>
</dbReference>
<dbReference type="Gene3D" id="1.10.287.700">
    <property type="entry name" value="Helix hairpin bin"/>
    <property type="match status" value="1"/>
</dbReference>
<dbReference type="PANTHER" id="PTHR47372">
    <property type="entry name" value="DAUER UP-REGULATED-RELATED"/>
    <property type="match status" value="1"/>
</dbReference>
<dbReference type="PANTHER" id="PTHR47372:SF11">
    <property type="entry name" value="RE19971P"/>
    <property type="match status" value="1"/>
</dbReference>
<dbReference type="SUPFAM" id="SSF58113">
    <property type="entry name" value="Apolipoprotein A-I"/>
    <property type="match status" value="1"/>
</dbReference>
<sequence>MAKKKKQIHLNIIDFQKYYQTDDLLLDTSISTEKKTVDNQKFIRKNRTLEKDEVVQNIDWRTFDNEKEKETNNENTSNVNKIKSPGLEKKNFKKSNDVITLGARNKNKSTNLNADDIDFTNLRNKKKEDDIDFTNLRNKKKEDDLDFSNLRNKKKEEEDVDFSNLRNKKKEDDVDFSNVRNKKKEDDLDFSNVRNKKKEDDVNFSDVRNKKKEDDLDFSNVRNKKKEDDVNFSDVRNKKKEDDLDFSNVRNKKKEDDVNFSDVRNKKKEDALDFSNVRNKKKEDDLDFSNVRNKNKEDDMDFSNVRNKKKEDDLDFSNVRNKKKEDDLDFSNVRNKKKEDDLNFSNVRNKKKEDDLDFSNVRNKNKEDDMDFSNVRNKKKEDDMDFSNVRNKKKEDDLDFSNVRNKKKEDDLDFSNVRNKKKEDDLDFSNLRNKKKEESKENDTNKSEKPLYLRRLEEYRKKKKLESQANDTAMKMHEKEQIDDIQERKEEIKEEFKEEVKEEIKEIKEEIKEVKEEIKEEIKEEIKEVKEEIKEEIKEEIKEVKEEIKEVKEEIKEVKEEIKEVKEEIKEEIKEVKEEIKEEIKEEIKEVKEEIKEEVKEEIKEVKEEIKEVKEEIKEEVKEEIKEVKEEIKEVKEEIKEEIKEVKEEIKEEVKEEIKEEIKEIKEELKNDISSETTKEEKNTEHKKEETEKKKFIPKRVIMYQQELKEKEERNLKLLEQQRKEREMRLQLIRSKTQGTSSTFIPSAKLKHLESLKEEKKKEVKTNIQPKDNNNNNNNNNNNNNNIAVLKNNKNEEQNVIKKKSIFLEIAEKTENAKIVEKTDIEEIAKKKREELYKKQLEKITKKNEEHLKYNNIYKHDVNIIKNFYNEIKDKIIQNYYFNQDDCISLCSILKTDDCNYMESHVPFYVVISIFMLSLPQKLQNDDYFKRASNIKNLLIYLKENSKIENHEDYILNDTLKFCDQLKYPHLSEETSLIETIFDTLLYSGVISKNSFIQWFQDDDSNAELKSKAMLQLIYWHKWLTEEEKDQEEEIDELDDTEEKNISDVSDIEKNVPKNFIFKKIKKKLF</sequence>
<accession>Q8IIG7</accession>
<accession>A0A143ZYR6</accession>
<evidence type="ECO:0000255" key="1"/>
<evidence type="ECO:0000256" key="2">
    <source>
        <dbReference type="SAM" id="MobiDB-lite"/>
    </source>
</evidence>
<evidence type="ECO:0000269" key="3">
    <source>
    </source>
</evidence>
<evidence type="ECO:0000305" key="4"/>
<organism>
    <name type="scientific">Plasmodium falciparum (isolate 3D7)</name>
    <dbReference type="NCBI Taxonomy" id="36329"/>
    <lineage>
        <taxon>Eukaryota</taxon>
        <taxon>Sar</taxon>
        <taxon>Alveolata</taxon>
        <taxon>Apicomplexa</taxon>
        <taxon>Aconoidasida</taxon>
        <taxon>Haemosporida</taxon>
        <taxon>Plasmodiidae</taxon>
        <taxon>Plasmodium</taxon>
        <taxon>Plasmodium (Laverania)</taxon>
    </lineage>
</organism>
<protein>
    <recommendedName>
        <fullName>Uncharacterized protein PF3D7_1120000</fullName>
    </recommendedName>
</protein>
<name>YPF05_PLAF7</name>
<comment type="biotechnology">
    <text evidence="3">Possible candidate for an effective malaria vaccine as determined by epitope response in sera.</text>
</comment>